<sequence length="393" mass="42685">MIETDILVVGAGPSGSLAAKEAALHGADVILIDRKSEIGSPKRCAEGVSKDGLAQLGIKPDPRWIARDLYGVRLVSPNNTSVWMDNNTIKIPEAGYILERKVFDKHMAMDAARAGAKIMIKTNATSLKRVDDGIIVSTNHMGKDIDIHAKIVIAADGPESRIGRWAGLECNTEFKYMESCIQFEMAGVNMENNRDIALFFGSVAPGGYVWIFPKGDDIANVGIGVLKNKTNKTAYEHLMEFIKTCPETKDAQPVEINVGGDPVGGIIKDRIGDNILVVGDAAGFVNSLTGGGINSALESGVYAGIVAAQAIKDGDYSKNNLKEYVSLTDEHIGKHYKKYNKAKEYLLSLEDEELDEIAEEFAKADFEEVNPRTLIKMLIKVSPKALVKLGKLF</sequence>
<accession>Q2NFF7</accession>
<gene>
    <name type="ordered locus">Msp_1062</name>
</gene>
<dbReference type="EC" id="1.3.-.-" evidence="1"/>
<dbReference type="EMBL" id="CP000102">
    <property type="protein sequence ID" value="ABC57446.1"/>
    <property type="molecule type" value="Genomic_DNA"/>
</dbReference>
<dbReference type="RefSeq" id="WP_011406645.1">
    <property type="nucleotide sequence ID" value="NC_007681.1"/>
</dbReference>
<dbReference type="SMR" id="Q2NFF7"/>
<dbReference type="STRING" id="339860.Msp_1062"/>
<dbReference type="KEGG" id="mst:Msp_1062"/>
<dbReference type="eggNOG" id="arCOG00570">
    <property type="taxonomic scope" value="Archaea"/>
</dbReference>
<dbReference type="HOGENOM" id="CLU_024648_0_0_2"/>
<dbReference type="OrthoDB" id="6062at2157"/>
<dbReference type="UniPathway" id="UPA00940"/>
<dbReference type="Proteomes" id="UP000001931">
    <property type="component" value="Chromosome"/>
</dbReference>
<dbReference type="GO" id="GO:0016020">
    <property type="term" value="C:membrane"/>
    <property type="evidence" value="ECO:0007669"/>
    <property type="project" value="GOC"/>
</dbReference>
<dbReference type="GO" id="GO:0050660">
    <property type="term" value="F:flavin adenine dinucleotide binding"/>
    <property type="evidence" value="ECO:0007669"/>
    <property type="project" value="UniProtKB-UniRule"/>
</dbReference>
<dbReference type="GO" id="GO:0045550">
    <property type="term" value="F:geranylgeranyl reductase activity"/>
    <property type="evidence" value="ECO:0007669"/>
    <property type="project" value="InterPro"/>
</dbReference>
<dbReference type="GO" id="GO:0016628">
    <property type="term" value="F:oxidoreductase activity, acting on the CH-CH group of donors, NAD or NADP as acceptor"/>
    <property type="evidence" value="ECO:0007669"/>
    <property type="project" value="InterPro"/>
</dbReference>
<dbReference type="GO" id="GO:0046474">
    <property type="term" value="P:glycerophospholipid biosynthetic process"/>
    <property type="evidence" value="ECO:0007669"/>
    <property type="project" value="UniProtKB-UniRule"/>
</dbReference>
<dbReference type="GO" id="GO:0046467">
    <property type="term" value="P:membrane lipid biosynthetic process"/>
    <property type="evidence" value="ECO:0007669"/>
    <property type="project" value="InterPro"/>
</dbReference>
<dbReference type="Gene3D" id="3.30.9.10">
    <property type="entry name" value="D-Amino Acid Oxidase, subunit A, domain 2"/>
    <property type="match status" value="1"/>
</dbReference>
<dbReference type="Gene3D" id="3.50.50.60">
    <property type="entry name" value="FAD/NAD(P)-binding domain"/>
    <property type="match status" value="1"/>
</dbReference>
<dbReference type="HAMAP" id="MF_01287">
    <property type="entry name" value="DGGGPL_reductase"/>
    <property type="match status" value="1"/>
</dbReference>
<dbReference type="InterPro" id="IPR023590">
    <property type="entry name" value="DGGGPL_reductase"/>
</dbReference>
<dbReference type="InterPro" id="IPR036188">
    <property type="entry name" value="FAD/NAD-bd_sf"/>
</dbReference>
<dbReference type="InterPro" id="IPR011777">
    <property type="entry name" value="Geranylgeranyl_Rdtase_fam"/>
</dbReference>
<dbReference type="InterPro" id="IPR050407">
    <property type="entry name" value="Geranylgeranyl_reductase"/>
</dbReference>
<dbReference type="InterPro" id="IPR054715">
    <property type="entry name" value="GGR_cat"/>
</dbReference>
<dbReference type="NCBIfam" id="TIGR02032">
    <property type="entry name" value="GG-red-SF"/>
    <property type="match status" value="1"/>
</dbReference>
<dbReference type="PANTHER" id="PTHR42685:SF18">
    <property type="entry name" value="DIGERANYLGERANYLGLYCEROPHOSPHOLIPID REDUCTASE"/>
    <property type="match status" value="1"/>
</dbReference>
<dbReference type="PANTHER" id="PTHR42685">
    <property type="entry name" value="GERANYLGERANYL DIPHOSPHATE REDUCTASE"/>
    <property type="match status" value="1"/>
</dbReference>
<dbReference type="Pfam" id="PF22578">
    <property type="entry name" value="GGR_cat"/>
    <property type="match status" value="1"/>
</dbReference>
<dbReference type="Pfam" id="PF13450">
    <property type="entry name" value="NAD_binding_8"/>
    <property type="match status" value="1"/>
</dbReference>
<dbReference type="PRINTS" id="PR00420">
    <property type="entry name" value="RNGMNOXGNASE"/>
</dbReference>
<dbReference type="SUPFAM" id="SSF51905">
    <property type="entry name" value="FAD/NAD(P)-binding domain"/>
    <property type="match status" value="1"/>
</dbReference>
<evidence type="ECO:0000255" key="1">
    <source>
        <dbReference type="HAMAP-Rule" id="MF_01287"/>
    </source>
</evidence>
<name>GGR2_METST</name>
<feature type="chain" id="PRO_0000351468" description="Digeranylgeranylglycerophospholipid reductase 2">
    <location>
        <begin position="1"/>
        <end position="393"/>
    </location>
</feature>
<feature type="binding site" evidence="1">
    <location>
        <position position="33"/>
    </location>
    <ligand>
        <name>FAD</name>
        <dbReference type="ChEBI" id="CHEBI:57692"/>
    </ligand>
</feature>
<feature type="binding site" evidence="1">
    <location>
        <position position="44"/>
    </location>
    <ligand>
        <name>FAD</name>
        <dbReference type="ChEBI" id="CHEBI:57692"/>
    </ligand>
</feature>
<feature type="binding site" evidence="1">
    <location>
        <position position="45"/>
    </location>
    <ligand>
        <name>FAD</name>
        <dbReference type="ChEBI" id="CHEBI:57692"/>
    </ligand>
</feature>
<feature type="binding site" evidence="1">
    <location>
        <position position="47"/>
    </location>
    <ligand>
        <name>FAD</name>
        <dbReference type="ChEBI" id="CHEBI:57692"/>
    </ligand>
</feature>
<feature type="binding site" evidence="1">
    <location>
        <position position="100"/>
    </location>
    <ligand>
        <name>FAD</name>
        <dbReference type="ChEBI" id="CHEBI:57692"/>
    </ligand>
</feature>
<feature type="binding site" evidence="1">
    <location>
        <position position="124"/>
    </location>
    <ligand>
        <name>FAD</name>
        <dbReference type="ChEBI" id="CHEBI:57692"/>
    </ligand>
</feature>
<feature type="binding site" evidence="1">
    <location>
        <position position="280"/>
    </location>
    <ligand>
        <name>FAD</name>
        <dbReference type="ChEBI" id="CHEBI:57692"/>
    </ligand>
</feature>
<feature type="binding site" evidence="1">
    <location>
        <position position="292"/>
    </location>
    <ligand>
        <name>FAD</name>
        <dbReference type="ChEBI" id="CHEBI:57692"/>
    </ligand>
</feature>
<feature type="binding site" evidence="1">
    <location>
        <position position="293"/>
    </location>
    <ligand>
        <name>FAD</name>
        <dbReference type="ChEBI" id="CHEBI:57692"/>
    </ligand>
</feature>
<proteinExistence type="inferred from homology"/>
<comment type="function">
    <text evidence="1">Is involved in the reduction of 2,3-digeranylgeranylglycerophospholipids (unsaturated archaeols) into 2,3-diphytanylglycerophospholipids (saturated archaeols) in the biosynthesis of archaeal membrane lipids. Catalyzes the formation of archaetidic acid (2,3-di-O-phytanyl-sn-glyceryl phosphate) from 2,3-di-O-geranylgeranylglyceryl phosphate (DGGGP) via the hydrogenation of each double bond of the isoprenoid chains. Is also probably able to reduce double bonds of geranyl groups in CDP-2,3-bis-O-(geranylgeranyl)-sn-glycerol and archaetidylserine, thus acting at various stages in the biosynthesis of archaeal membrane lipids.</text>
</comment>
<comment type="catalytic activity">
    <reaction evidence="1">
        <text>a 2,3-bis-O-phytanyl-sn-glycerol 1-phospholipid + 8 A = a 2,3-bis-O-(geranylgeranyl)-sn-glycerol 1-phospholipid + 8 AH2</text>
        <dbReference type="Rhea" id="RHEA:64376"/>
        <dbReference type="ChEBI" id="CHEBI:13193"/>
        <dbReference type="ChEBI" id="CHEBI:17499"/>
        <dbReference type="ChEBI" id="CHEBI:138139"/>
        <dbReference type="ChEBI" id="CHEBI:138140"/>
    </reaction>
    <physiologicalReaction direction="right-to-left" evidence="1">
        <dbReference type="Rhea" id="RHEA:64378"/>
    </physiologicalReaction>
</comment>
<comment type="catalytic activity">
    <reaction evidence="1">
        <text>2,3-bis-O-(phytanyl)-sn-glycerol 1-phosphate + 8 A = 2,3-bis-O-(geranylgeranyl)-sn-glycerol 1-phosphate + 8 AH2</text>
        <dbReference type="Rhea" id="RHEA:64368"/>
        <dbReference type="ChEBI" id="CHEBI:13193"/>
        <dbReference type="ChEBI" id="CHEBI:17499"/>
        <dbReference type="ChEBI" id="CHEBI:58837"/>
        <dbReference type="ChEBI" id="CHEBI:73125"/>
    </reaction>
    <physiologicalReaction direction="right-to-left" evidence="1">
        <dbReference type="Rhea" id="RHEA:64370"/>
    </physiologicalReaction>
</comment>
<comment type="catalytic activity">
    <reaction evidence="1">
        <text>CDP-2,3-bis-O-(geranylgeranyl)-sn-glycerol + 8 AH2 = CDP-2,3-bis-O-(phytanyl)-sn-glycerol + 8 A</text>
        <dbReference type="Rhea" id="RHEA:84207"/>
        <dbReference type="ChEBI" id="CHEBI:13193"/>
        <dbReference type="ChEBI" id="CHEBI:17499"/>
        <dbReference type="ChEBI" id="CHEBI:58838"/>
        <dbReference type="ChEBI" id="CHEBI:74004"/>
    </reaction>
    <physiologicalReaction direction="left-to-right" evidence="1">
        <dbReference type="Rhea" id="RHEA:84208"/>
    </physiologicalReaction>
</comment>
<comment type="catalytic activity">
    <reaction evidence="1">
        <text>archaetidylserine + 8 AH2 = 2,3-bis-O-phytanyl-sn-glycero-3-phospho-L-serine + 8 A</text>
        <dbReference type="Rhea" id="RHEA:84215"/>
        <dbReference type="ChEBI" id="CHEBI:13193"/>
        <dbReference type="ChEBI" id="CHEBI:17499"/>
        <dbReference type="ChEBI" id="CHEBI:71517"/>
        <dbReference type="ChEBI" id="CHEBI:74853"/>
    </reaction>
    <physiologicalReaction direction="left-to-right" evidence="1">
        <dbReference type="Rhea" id="RHEA:84216"/>
    </physiologicalReaction>
</comment>
<comment type="cofactor">
    <cofactor evidence="1">
        <name>FAD</name>
        <dbReference type="ChEBI" id="CHEBI:57692"/>
    </cofactor>
    <text evidence="1">Binds 1 FAD per subunit.</text>
</comment>
<comment type="pathway">
    <text evidence="1">Membrane lipid metabolism; glycerophospholipid metabolism.</text>
</comment>
<comment type="miscellaneous">
    <text evidence="1">Reduction reaction proceeds via syn addition of hydrogen for double bonds.</text>
</comment>
<comment type="similarity">
    <text evidence="1">Belongs to the geranylgeranyl reductase family. DGGGPL reductase subfamily.</text>
</comment>
<organism>
    <name type="scientific">Methanosphaera stadtmanae (strain ATCC 43021 / DSM 3091 / JCM 11832 / MCB-3)</name>
    <dbReference type="NCBI Taxonomy" id="339860"/>
    <lineage>
        <taxon>Archaea</taxon>
        <taxon>Methanobacteriati</taxon>
        <taxon>Methanobacteriota</taxon>
        <taxon>Methanomada group</taxon>
        <taxon>Methanobacteria</taxon>
        <taxon>Methanobacteriales</taxon>
        <taxon>Methanobacteriaceae</taxon>
        <taxon>Methanosphaera</taxon>
    </lineage>
</organism>
<protein>
    <recommendedName>
        <fullName evidence="1">Digeranylgeranylglycerophospholipid reductase 2</fullName>
        <shortName evidence="1">DGGGPL reductase 2</shortName>
        <ecNumber evidence="1">1.3.-.-</ecNumber>
    </recommendedName>
    <alternativeName>
        <fullName evidence="1">2,3-bis-O-geranylgeranylglyceryl phosphate reductase 2</fullName>
    </alternativeName>
    <alternativeName>
        <fullName evidence="1">Geranylgeranyl reductase 2</fullName>
        <shortName evidence="1">GGR 2</shortName>
    </alternativeName>
</protein>
<reference key="1">
    <citation type="journal article" date="2006" name="J. Bacteriol.">
        <title>The genome sequence of Methanosphaera stadtmanae reveals why this human intestinal archaeon is restricted to methanol and H2 for methane formation and ATP synthesis.</title>
        <authorList>
            <person name="Fricke W.F."/>
            <person name="Seedorf H."/>
            <person name="Henne A."/>
            <person name="Kruer M."/>
            <person name="Liesegang H."/>
            <person name="Hedderich R."/>
            <person name="Gottschalk G."/>
            <person name="Thauer R.K."/>
        </authorList>
    </citation>
    <scope>NUCLEOTIDE SEQUENCE [LARGE SCALE GENOMIC DNA]</scope>
    <source>
        <strain>ATCC 43021 / DSM 3091 / JCM 11832 / MCB-3</strain>
    </source>
</reference>
<keyword id="KW-0274">FAD</keyword>
<keyword id="KW-0285">Flavoprotein</keyword>
<keyword id="KW-0444">Lipid biosynthesis</keyword>
<keyword id="KW-0443">Lipid metabolism</keyword>
<keyword id="KW-0560">Oxidoreductase</keyword>
<keyword id="KW-0594">Phospholipid biosynthesis</keyword>
<keyword id="KW-1208">Phospholipid metabolism</keyword>
<keyword id="KW-1185">Reference proteome</keyword>